<reference key="1">
    <citation type="journal article" date="2000" name="Nature">
        <title>The genome sequence of the food-borne pathogen Campylobacter jejuni reveals hypervariable sequences.</title>
        <authorList>
            <person name="Parkhill J."/>
            <person name="Wren B.W."/>
            <person name="Mungall K.L."/>
            <person name="Ketley J.M."/>
            <person name="Churcher C.M."/>
            <person name="Basham D."/>
            <person name="Chillingworth T."/>
            <person name="Davies R.M."/>
            <person name="Feltwell T."/>
            <person name="Holroyd S."/>
            <person name="Jagels K."/>
            <person name="Karlyshev A.V."/>
            <person name="Moule S."/>
            <person name="Pallen M.J."/>
            <person name="Penn C.W."/>
            <person name="Quail M.A."/>
            <person name="Rajandream M.A."/>
            <person name="Rutherford K.M."/>
            <person name="van Vliet A.H.M."/>
            <person name="Whitehead S."/>
            <person name="Barrell B.G."/>
        </authorList>
    </citation>
    <scope>NUCLEOTIDE SEQUENCE [LARGE SCALE GENOMIC DNA]</scope>
    <source>
        <strain>ATCC 700819 / NCTC 11168</strain>
    </source>
</reference>
<dbReference type="EC" id="2.7.7.81"/>
<dbReference type="EMBL" id="AL111168">
    <property type="protein sequence ID" value="CAL35425.1"/>
    <property type="molecule type" value="Genomic_DNA"/>
</dbReference>
<dbReference type="PIR" id="D81274">
    <property type="entry name" value="D81274"/>
</dbReference>
<dbReference type="RefSeq" id="WP_002777693.1">
    <property type="nucleotide sequence ID" value="NZ_SZUC01000001.1"/>
</dbReference>
<dbReference type="RefSeq" id="YP_002344701.1">
    <property type="nucleotide sequence ID" value="NC_002163.1"/>
</dbReference>
<dbReference type="SMR" id="Q0P8U6"/>
<dbReference type="IntAct" id="Q0P8U6">
    <property type="interactions" value="41"/>
</dbReference>
<dbReference type="STRING" id="192222.Cj1311"/>
<dbReference type="PaxDb" id="192222-Cj1311"/>
<dbReference type="EnsemblBacteria" id="CAL35425">
    <property type="protein sequence ID" value="CAL35425"/>
    <property type="gene ID" value="Cj1311"/>
</dbReference>
<dbReference type="GeneID" id="905603"/>
<dbReference type="KEGG" id="cje:Cj1311"/>
<dbReference type="PATRIC" id="fig|192222.6.peg.1293"/>
<dbReference type="eggNOG" id="COG1083">
    <property type="taxonomic scope" value="Bacteria"/>
</dbReference>
<dbReference type="HOGENOM" id="CLU_042930_1_0_7"/>
<dbReference type="OrthoDB" id="9805604at2"/>
<dbReference type="Proteomes" id="UP000000799">
    <property type="component" value="Chromosome"/>
</dbReference>
<dbReference type="GO" id="GO:0046872">
    <property type="term" value="F:metal ion binding"/>
    <property type="evidence" value="ECO:0007669"/>
    <property type="project" value="UniProtKB-KW"/>
</dbReference>
<dbReference type="GO" id="GO:0008781">
    <property type="term" value="F:N-acylneuraminate cytidylyltransferase activity"/>
    <property type="evidence" value="ECO:0007669"/>
    <property type="project" value="TreeGrafter"/>
</dbReference>
<dbReference type="CDD" id="cd02513">
    <property type="entry name" value="CMP-NeuAc_Synthase"/>
    <property type="match status" value="1"/>
</dbReference>
<dbReference type="Gene3D" id="3.90.550.10">
    <property type="entry name" value="Spore Coat Polysaccharide Biosynthesis Protein SpsA, Chain A"/>
    <property type="match status" value="1"/>
</dbReference>
<dbReference type="InterPro" id="IPR050793">
    <property type="entry name" value="CMP-NeuNAc_synthase"/>
</dbReference>
<dbReference type="InterPro" id="IPR003329">
    <property type="entry name" value="Cytidylyl_trans"/>
</dbReference>
<dbReference type="InterPro" id="IPR029044">
    <property type="entry name" value="Nucleotide-diphossugar_trans"/>
</dbReference>
<dbReference type="InterPro" id="IPR020039">
    <property type="entry name" value="PseF"/>
</dbReference>
<dbReference type="NCBIfam" id="TIGR03584">
    <property type="entry name" value="PseF"/>
    <property type="match status" value="1"/>
</dbReference>
<dbReference type="PANTHER" id="PTHR21485">
    <property type="entry name" value="HAD SUPERFAMILY MEMBERS CMAS AND KDSC"/>
    <property type="match status" value="1"/>
</dbReference>
<dbReference type="PANTHER" id="PTHR21485:SF6">
    <property type="entry name" value="N-ACYLNEURAMINATE CYTIDYLYLTRANSFERASE-RELATED"/>
    <property type="match status" value="1"/>
</dbReference>
<dbReference type="Pfam" id="PF02348">
    <property type="entry name" value="CTP_transf_3"/>
    <property type="match status" value="1"/>
</dbReference>
<dbReference type="SUPFAM" id="SSF53448">
    <property type="entry name" value="Nucleotide-diphospho-sugar transferases"/>
    <property type="match status" value="1"/>
</dbReference>
<gene>
    <name type="primary">pseF</name>
    <name type="ordered locus">Cj1311</name>
</gene>
<sequence>MKNLCIIPARGGSKRIPRKNIIDFLGKPLISYSIENALNSGIFDEVVLSSDDEEIIEVALKYGAKAPFVRDKNLSDDYASSTAVVQNAIEILQSQNQIYDHVCCLYATAPLLNKDILKQAYEKFIQNQSKFLFAATEFEYPIQRAFYLNENNQVYMFDEKHYKSRSQDLTKAYHDAGAFYFGTSKAWLEEDFIFKPHSSVFVLPRNLVCDIDTIQDLEFAKILYKVNHESAF</sequence>
<organism>
    <name type="scientific">Campylobacter jejuni subsp. jejuni serotype O:2 (strain ATCC 700819 / NCTC 11168)</name>
    <dbReference type="NCBI Taxonomy" id="192222"/>
    <lineage>
        <taxon>Bacteria</taxon>
        <taxon>Pseudomonadati</taxon>
        <taxon>Campylobacterota</taxon>
        <taxon>Epsilonproteobacteria</taxon>
        <taxon>Campylobacterales</taxon>
        <taxon>Campylobacteraceae</taxon>
        <taxon>Campylobacter</taxon>
    </lineage>
</organism>
<accession>Q0P8U6</accession>
<keyword id="KW-0460">Magnesium</keyword>
<keyword id="KW-0479">Metal-binding</keyword>
<keyword id="KW-0548">Nucleotidyltransferase</keyword>
<keyword id="KW-1185">Reference proteome</keyword>
<keyword id="KW-0808">Transferase</keyword>
<protein>
    <recommendedName>
        <fullName>Pseudaminic acid cytidylyltransferase</fullName>
        <ecNumber>2.7.7.81</ecNumber>
    </recommendedName>
    <alternativeName>
        <fullName>Pseudaminic acid biosynthesis protein F</fullName>
    </alternativeName>
</protein>
<feature type="chain" id="PRO_0000418937" description="Pseudaminic acid cytidylyltransferase">
    <location>
        <begin position="1"/>
        <end position="232"/>
    </location>
</feature>
<name>PSEF_CAMJE</name>
<proteinExistence type="inferred from homology"/>
<evidence type="ECO:0000250" key="1"/>
<evidence type="ECO:0000305" key="2"/>
<comment type="function">
    <text evidence="1">Catalyzes the final step in the biosynthesis of pseudaminic acid, a sialic-acid-like sugar that is used to modify flagellin. Mediates the activation of pseudaminic acid with CMP by forming CMP-pseudaminic acid (By similarity).</text>
</comment>
<comment type="catalytic activity">
    <reaction>
        <text>pseudaminate + CTP = CMP-pseudaminate + diphosphate</text>
        <dbReference type="Rhea" id="RHEA:32083"/>
        <dbReference type="ChEBI" id="CHEBI:33019"/>
        <dbReference type="ChEBI" id="CHEBI:37563"/>
        <dbReference type="ChEBI" id="CHEBI:63282"/>
        <dbReference type="ChEBI" id="CHEBI:63680"/>
        <dbReference type="EC" id="2.7.7.81"/>
    </reaction>
</comment>
<comment type="cofactor">
    <cofactor evidence="1">
        <name>Mg(2+)</name>
        <dbReference type="ChEBI" id="CHEBI:18420"/>
    </cofactor>
</comment>
<comment type="similarity">
    <text evidence="2">Belongs to the CMP-NeuNAc synthase family.</text>
</comment>